<reference key="1">
    <citation type="journal article" date="2011" name="Stand. Genomic Sci.">
        <title>Complete genome sequence of 'Thioalkalivibrio sulfidophilus' HL-EbGr7.</title>
        <authorList>
            <person name="Muyzer G."/>
            <person name="Sorokin D.Y."/>
            <person name="Mavromatis K."/>
            <person name="Lapidus A."/>
            <person name="Clum A."/>
            <person name="Ivanova N."/>
            <person name="Pati A."/>
            <person name="d'Haeseleer P."/>
            <person name="Woyke T."/>
            <person name="Kyrpides N.C."/>
        </authorList>
    </citation>
    <scope>NUCLEOTIDE SEQUENCE [LARGE SCALE GENOMIC DNA]</scope>
    <source>
        <strain>HL-EbGR7</strain>
    </source>
</reference>
<proteinExistence type="inferred from homology"/>
<comment type="function">
    <text evidence="1">Involved in the de novo purine biosynthesis. Catalyzes the transfer of formate to 5-phospho-ribosyl-glycinamide (GAR), producing 5-phospho-ribosyl-N-formylglycinamide (FGAR). Formate is provided by PurU via hydrolysis of 10-formyl-tetrahydrofolate.</text>
</comment>
<comment type="catalytic activity">
    <reaction evidence="1">
        <text>N(1)-(5-phospho-beta-D-ribosyl)glycinamide + formate + ATP = N(2)-formyl-N(1)-(5-phospho-beta-D-ribosyl)glycinamide + ADP + phosphate + H(+)</text>
        <dbReference type="Rhea" id="RHEA:24829"/>
        <dbReference type="ChEBI" id="CHEBI:15378"/>
        <dbReference type="ChEBI" id="CHEBI:15740"/>
        <dbReference type="ChEBI" id="CHEBI:30616"/>
        <dbReference type="ChEBI" id="CHEBI:43474"/>
        <dbReference type="ChEBI" id="CHEBI:143788"/>
        <dbReference type="ChEBI" id="CHEBI:147286"/>
        <dbReference type="ChEBI" id="CHEBI:456216"/>
        <dbReference type="EC" id="6.3.1.21"/>
    </reaction>
    <physiologicalReaction direction="left-to-right" evidence="1">
        <dbReference type="Rhea" id="RHEA:24830"/>
    </physiologicalReaction>
</comment>
<comment type="pathway">
    <text evidence="1">Purine metabolism; IMP biosynthesis via de novo pathway; N(2)-formyl-N(1)-(5-phospho-D-ribosyl)glycinamide from N(1)-(5-phospho-D-ribosyl)glycinamide (formate route): step 1/1.</text>
</comment>
<comment type="subunit">
    <text evidence="1">Homodimer.</text>
</comment>
<comment type="similarity">
    <text evidence="1">Belongs to the PurK/PurT family.</text>
</comment>
<dbReference type="EC" id="6.3.1.21" evidence="1"/>
<dbReference type="EMBL" id="CP001339">
    <property type="protein sequence ID" value="ACL74358.1"/>
    <property type="molecule type" value="Genomic_DNA"/>
</dbReference>
<dbReference type="RefSeq" id="WP_012639820.1">
    <property type="nucleotide sequence ID" value="NC_011901.1"/>
</dbReference>
<dbReference type="SMR" id="B8GRA4"/>
<dbReference type="STRING" id="396588.Tgr7_3291"/>
<dbReference type="KEGG" id="tgr:Tgr7_3291"/>
<dbReference type="eggNOG" id="COG0027">
    <property type="taxonomic scope" value="Bacteria"/>
</dbReference>
<dbReference type="HOGENOM" id="CLU_011534_1_3_6"/>
<dbReference type="OrthoDB" id="9804625at2"/>
<dbReference type="UniPathway" id="UPA00074">
    <property type="reaction ID" value="UER00127"/>
</dbReference>
<dbReference type="Proteomes" id="UP000002383">
    <property type="component" value="Chromosome"/>
</dbReference>
<dbReference type="GO" id="GO:0005829">
    <property type="term" value="C:cytosol"/>
    <property type="evidence" value="ECO:0007669"/>
    <property type="project" value="TreeGrafter"/>
</dbReference>
<dbReference type="GO" id="GO:0005524">
    <property type="term" value="F:ATP binding"/>
    <property type="evidence" value="ECO:0007669"/>
    <property type="project" value="UniProtKB-UniRule"/>
</dbReference>
<dbReference type="GO" id="GO:0000287">
    <property type="term" value="F:magnesium ion binding"/>
    <property type="evidence" value="ECO:0007669"/>
    <property type="project" value="InterPro"/>
</dbReference>
<dbReference type="GO" id="GO:0043815">
    <property type="term" value="F:phosphoribosylglycinamide formyltransferase 2 activity"/>
    <property type="evidence" value="ECO:0007669"/>
    <property type="project" value="UniProtKB-UniRule"/>
</dbReference>
<dbReference type="GO" id="GO:0004644">
    <property type="term" value="F:phosphoribosylglycinamide formyltransferase activity"/>
    <property type="evidence" value="ECO:0007669"/>
    <property type="project" value="InterPro"/>
</dbReference>
<dbReference type="GO" id="GO:0006189">
    <property type="term" value="P:'de novo' IMP biosynthetic process"/>
    <property type="evidence" value="ECO:0007669"/>
    <property type="project" value="UniProtKB-UniRule"/>
</dbReference>
<dbReference type="Gene3D" id="3.40.50.20">
    <property type="match status" value="1"/>
</dbReference>
<dbReference type="Gene3D" id="3.30.1490.20">
    <property type="entry name" value="ATP-grasp fold, A domain"/>
    <property type="match status" value="1"/>
</dbReference>
<dbReference type="Gene3D" id="3.30.470.20">
    <property type="entry name" value="ATP-grasp fold, B domain"/>
    <property type="match status" value="1"/>
</dbReference>
<dbReference type="HAMAP" id="MF_01643">
    <property type="entry name" value="PurT"/>
    <property type="match status" value="1"/>
</dbReference>
<dbReference type="InterPro" id="IPR011761">
    <property type="entry name" value="ATP-grasp"/>
</dbReference>
<dbReference type="InterPro" id="IPR003135">
    <property type="entry name" value="ATP-grasp_carboxylate-amine"/>
</dbReference>
<dbReference type="InterPro" id="IPR013815">
    <property type="entry name" value="ATP_grasp_subdomain_1"/>
</dbReference>
<dbReference type="InterPro" id="IPR016185">
    <property type="entry name" value="PreATP-grasp_dom_sf"/>
</dbReference>
<dbReference type="InterPro" id="IPR005862">
    <property type="entry name" value="PurT"/>
</dbReference>
<dbReference type="InterPro" id="IPR054350">
    <property type="entry name" value="PurT/PurK_preATP-grasp"/>
</dbReference>
<dbReference type="InterPro" id="IPR048740">
    <property type="entry name" value="PurT_C"/>
</dbReference>
<dbReference type="InterPro" id="IPR011054">
    <property type="entry name" value="Rudment_hybrid_motif"/>
</dbReference>
<dbReference type="NCBIfam" id="NF006766">
    <property type="entry name" value="PRK09288.1"/>
    <property type="match status" value="1"/>
</dbReference>
<dbReference type="NCBIfam" id="TIGR01142">
    <property type="entry name" value="purT"/>
    <property type="match status" value="1"/>
</dbReference>
<dbReference type="PANTHER" id="PTHR43055">
    <property type="entry name" value="FORMATE-DEPENDENT PHOSPHORIBOSYLGLYCINAMIDE FORMYLTRANSFERASE"/>
    <property type="match status" value="1"/>
</dbReference>
<dbReference type="PANTHER" id="PTHR43055:SF1">
    <property type="entry name" value="FORMATE-DEPENDENT PHOSPHORIBOSYLGLYCINAMIDE FORMYLTRANSFERASE"/>
    <property type="match status" value="1"/>
</dbReference>
<dbReference type="Pfam" id="PF02222">
    <property type="entry name" value="ATP-grasp"/>
    <property type="match status" value="1"/>
</dbReference>
<dbReference type="Pfam" id="PF21244">
    <property type="entry name" value="PurT_C"/>
    <property type="match status" value="1"/>
</dbReference>
<dbReference type="Pfam" id="PF22660">
    <property type="entry name" value="RS_preATP-grasp-like"/>
    <property type="match status" value="1"/>
</dbReference>
<dbReference type="SUPFAM" id="SSF56059">
    <property type="entry name" value="Glutathione synthetase ATP-binding domain-like"/>
    <property type="match status" value="1"/>
</dbReference>
<dbReference type="SUPFAM" id="SSF52440">
    <property type="entry name" value="PreATP-grasp domain"/>
    <property type="match status" value="1"/>
</dbReference>
<dbReference type="SUPFAM" id="SSF51246">
    <property type="entry name" value="Rudiment single hybrid motif"/>
    <property type="match status" value="1"/>
</dbReference>
<dbReference type="PROSITE" id="PS50975">
    <property type="entry name" value="ATP_GRASP"/>
    <property type="match status" value="1"/>
</dbReference>
<gene>
    <name evidence="1" type="primary">purT</name>
    <name type="ordered locus">Tgr7_3291</name>
</gene>
<accession>B8GRA4</accession>
<keyword id="KW-0067">ATP-binding</keyword>
<keyword id="KW-0436">Ligase</keyword>
<keyword id="KW-0460">Magnesium</keyword>
<keyword id="KW-0479">Metal-binding</keyword>
<keyword id="KW-0547">Nucleotide-binding</keyword>
<keyword id="KW-0658">Purine biosynthesis</keyword>
<keyword id="KW-1185">Reference proteome</keyword>
<organism>
    <name type="scientific">Thioalkalivibrio sulfidiphilus (strain HL-EbGR7)</name>
    <dbReference type="NCBI Taxonomy" id="396588"/>
    <lineage>
        <taxon>Bacteria</taxon>
        <taxon>Pseudomonadati</taxon>
        <taxon>Pseudomonadota</taxon>
        <taxon>Gammaproteobacteria</taxon>
        <taxon>Chromatiales</taxon>
        <taxon>Ectothiorhodospiraceae</taxon>
        <taxon>Thioalkalivibrio</taxon>
    </lineage>
</organism>
<evidence type="ECO:0000255" key="1">
    <source>
        <dbReference type="HAMAP-Rule" id="MF_01643"/>
    </source>
</evidence>
<feature type="chain" id="PRO_1000186900" description="Formate-dependent phosphoribosylglycinamide formyltransferase">
    <location>
        <begin position="1"/>
        <end position="399"/>
    </location>
</feature>
<feature type="domain" description="ATP-grasp" evidence="1">
    <location>
        <begin position="120"/>
        <end position="315"/>
    </location>
</feature>
<feature type="binding site" evidence="1">
    <location>
        <begin position="22"/>
        <end position="23"/>
    </location>
    <ligand>
        <name>N(1)-(5-phospho-beta-D-ribosyl)glycinamide</name>
        <dbReference type="ChEBI" id="CHEBI:143788"/>
    </ligand>
</feature>
<feature type="binding site" evidence="1">
    <location>
        <position position="82"/>
    </location>
    <ligand>
        <name>N(1)-(5-phospho-beta-D-ribosyl)glycinamide</name>
        <dbReference type="ChEBI" id="CHEBI:143788"/>
    </ligand>
</feature>
<feature type="binding site" evidence="1">
    <location>
        <position position="115"/>
    </location>
    <ligand>
        <name>ATP</name>
        <dbReference type="ChEBI" id="CHEBI:30616"/>
    </ligand>
</feature>
<feature type="binding site" evidence="1">
    <location>
        <position position="157"/>
    </location>
    <ligand>
        <name>ATP</name>
        <dbReference type="ChEBI" id="CHEBI:30616"/>
    </ligand>
</feature>
<feature type="binding site" evidence="1">
    <location>
        <begin position="162"/>
        <end position="167"/>
    </location>
    <ligand>
        <name>ATP</name>
        <dbReference type="ChEBI" id="CHEBI:30616"/>
    </ligand>
</feature>
<feature type="binding site" evidence="1">
    <location>
        <begin position="197"/>
        <end position="200"/>
    </location>
    <ligand>
        <name>ATP</name>
        <dbReference type="ChEBI" id="CHEBI:30616"/>
    </ligand>
</feature>
<feature type="binding site" evidence="1">
    <location>
        <position position="205"/>
    </location>
    <ligand>
        <name>ATP</name>
        <dbReference type="ChEBI" id="CHEBI:30616"/>
    </ligand>
</feature>
<feature type="binding site" evidence="1">
    <location>
        <position position="274"/>
    </location>
    <ligand>
        <name>Mg(2+)</name>
        <dbReference type="ChEBI" id="CHEBI:18420"/>
    </ligand>
</feature>
<feature type="binding site" evidence="1">
    <location>
        <position position="286"/>
    </location>
    <ligand>
        <name>Mg(2+)</name>
        <dbReference type="ChEBI" id="CHEBI:18420"/>
    </ligand>
</feature>
<feature type="binding site" evidence="1">
    <location>
        <position position="293"/>
    </location>
    <ligand>
        <name>N(1)-(5-phospho-beta-D-ribosyl)glycinamide</name>
        <dbReference type="ChEBI" id="CHEBI:143788"/>
    </ligand>
</feature>
<feature type="binding site" evidence="1">
    <location>
        <position position="362"/>
    </location>
    <ligand>
        <name>N(1)-(5-phospho-beta-D-ribosyl)glycinamide</name>
        <dbReference type="ChEBI" id="CHEBI:143788"/>
    </ligand>
</feature>
<feature type="binding site" evidence="1">
    <location>
        <begin position="369"/>
        <end position="370"/>
    </location>
    <ligand>
        <name>N(1)-(5-phospho-beta-D-ribosyl)glycinamide</name>
        <dbReference type="ChEBI" id="CHEBI:143788"/>
    </ligand>
</feature>
<name>PURT_THISH</name>
<sequence>MTRIGTPLSPSATRVMLLGAGELGKEVIIALQRLGVEVIAVDRYENAPGHQVAHRAHVIPMTDASALRELVLREKPDLIVPEIEAIATDELARIEAEGIARVIPTARATQLTMNREGIRRLAAEELGLQTSRYAFADSLESLTAAIDGGIGYPCIIKPVMSSSGKGQSLVADASELTRAWDYARSAGRVDQGRVIVEAVVEFDFEITLLTVRSRGGDGNIRTDFCAPVGHRQVKGDYVESWQPQPMSETALDTAREMAAAVTGALGGQGLFGVEFFVRGDEVWFSEVSPRPHDTGLVTLATQWQSEFELHARAILGLPVDTRLRNPGASAVIYGGVEAQGVAFENVDQALAVPGTDIRLFGKPEAFERRRMGVAVAHGDDIEDCRARAREAAGRVRVVV</sequence>
<protein>
    <recommendedName>
        <fullName evidence="1">Formate-dependent phosphoribosylglycinamide formyltransferase</fullName>
        <ecNumber evidence="1">6.3.1.21</ecNumber>
    </recommendedName>
    <alternativeName>
        <fullName evidence="1">5'-phosphoribosylglycinamide transformylase 2</fullName>
    </alternativeName>
    <alternativeName>
        <fullName evidence="1">Formate-dependent GAR transformylase</fullName>
    </alternativeName>
    <alternativeName>
        <fullName evidence="1">GAR transformylase 2</fullName>
        <shortName evidence="1">GART 2</shortName>
    </alternativeName>
    <alternativeName>
        <fullName evidence="1">Non-folate glycinamide ribonucleotide transformylase</fullName>
    </alternativeName>
    <alternativeName>
        <fullName evidence="1">Phosphoribosylglycinamide formyltransferase 2</fullName>
    </alternativeName>
</protein>